<proteinExistence type="inferred from homology"/>
<protein>
    <recommendedName>
        <fullName evidence="1">Phosphoglycerate kinase</fullName>
        <ecNumber evidence="1">2.7.2.3</ecNumber>
    </recommendedName>
</protein>
<comment type="catalytic activity">
    <reaction evidence="1">
        <text>(2R)-3-phosphoglycerate + ATP = (2R)-3-phospho-glyceroyl phosphate + ADP</text>
        <dbReference type="Rhea" id="RHEA:14801"/>
        <dbReference type="ChEBI" id="CHEBI:30616"/>
        <dbReference type="ChEBI" id="CHEBI:57604"/>
        <dbReference type="ChEBI" id="CHEBI:58272"/>
        <dbReference type="ChEBI" id="CHEBI:456216"/>
        <dbReference type="EC" id="2.7.2.3"/>
    </reaction>
</comment>
<comment type="pathway">
    <text evidence="1">Carbohydrate degradation; glycolysis; pyruvate from D-glyceraldehyde 3-phosphate: step 2/5.</text>
</comment>
<comment type="subunit">
    <text evidence="1">Monomer.</text>
</comment>
<comment type="subcellular location">
    <subcellularLocation>
        <location evidence="1">Cytoplasm</location>
    </subcellularLocation>
</comment>
<comment type="similarity">
    <text evidence="1">Belongs to the phosphoglycerate kinase family.</text>
</comment>
<organism>
    <name type="scientific">Prosthecochloris aestuarii (strain DSM 271 / SK 413)</name>
    <dbReference type="NCBI Taxonomy" id="290512"/>
    <lineage>
        <taxon>Bacteria</taxon>
        <taxon>Pseudomonadati</taxon>
        <taxon>Chlorobiota</taxon>
        <taxon>Chlorobiia</taxon>
        <taxon>Chlorobiales</taxon>
        <taxon>Chlorobiaceae</taxon>
        <taxon>Prosthecochloris</taxon>
    </lineage>
</organism>
<keyword id="KW-0067">ATP-binding</keyword>
<keyword id="KW-0963">Cytoplasm</keyword>
<keyword id="KW-0324">Glycolysis</keyword>
<keyword id="KW-0418">Kinase</keyword>
<keyword id="KW-0547">Nucleotide-binding</keyword>
<keyword id="KW-0808">Transferase</keyword>
<feature type="chain" id="PRO_1000096364" description="Phosphoglycerate kinase">
    <location>
        <begin position="1"/>
        <end position="397"/>
    </location>
</feature>
<feature type="binding site" evidence="1">
    <location>
        <begin position="21"/>
        <end position="23"/>
    </location>
    <ligand>
        <name>substrate</name>
    </ligand>
</feature>
<feature type="binding site" evidence="1">
    <location>
        <position position="37"/>
    </location>
    <ligand>
        <name>substrate</name>
    </ligand>
</feature>
<feature type="binding site" evidence="1">
    <location>
        <begin position="60"/>
        <end position="63"/>
    </location>
    <ligand>
        <name>substrate</name>
    </ligand>
</feature>
<feature type="binding site" evidence="1">
    <location>
        <position position="119"/>
    </location>
    <ligand>
        <name>substrate</name>
    </ligand>
</feature>
<feature type="binding site" evidence="1">
    <location>
        <position position="152"/>
    </location>
    <ligand>
        <name>substrate</name>
    </ligand>
</feature>
<feature type="binding site" evidence="1">
    <location>
        <position position="203"/>
    </location>
    <ligand>
        <name>ATP</name>
        <dbReference type="ChEBI" id="CHEBI:30616"/>
    </ligand>
</feature>
<feature type="binding site" evidence="1">
    <location>
        <position position="294"/>
    </location>
    <ligand>
        <name>ATP</name>
        <dbReference type="ChEBI" id="CHEBI:30616"/>
    </ligand>
</feature>
<feature type="binding site" evidence="1">
    <location>
        <position position="325"/>
    </location>
    <ligand>
        <name>ATP</name>
        <dbReference type="ChEBI" id="CHEBI:30616"/>
    </ligand>
</feature>
<feature type="binding site" evidence="1">
    <location>
        <begin position="354"/>
        <end position="357"/>
    </location>
    <ligand>
        <name>ATP</name>
        <dbReference type="ChEBI" id="CHEBI:30616"/>
    </ligand>
</feature>
<gene>
    <name evidence="1" type="primary">pgk</name>
    <name type="ordered locus">Paes_2276</name>
</gene>
<evidence type="ECO:0000255" key="1">
    <source>
        <dbReference type="HAMAP-Rule" id="MF_00145"/>
    </source>
</evidence>
<accession>B4S6S2</accession>
<sequence length="397" mass="42482">MQKKTLSDISCKGKRILMRVDFNVPLDLNGTITNDKRIIEALPSIRQVLETGGRLILMSHLGRPKGKVTPELSLAPVARRLSELLDTDVVMANNCIGTEAMQQALALQDGEVMMLENLRFHPEEEKNDPEFARELASMGEIYVNDAFGTAHRAHASTEGICHYVPISVAGFLIEKELRYLGNALANPERPFLAILGGAKISGKIDVLDNLFDKVDTILIGGAMIFTFFKAQGYQVGTSLVEEDKIELAKHLLEKAAAKNIRMLLPEDVIAASAFSADAETATVPIDSIPETMMGLDIGPKTIDTYSREILKARTIVWNGPMGVFEIDAFATGTIAIAHALADATAKGAISIIGGGDSAAAVMKAGLESGITHISTGGGASLEFLEGKELPGIAALND</sequence>
<reference key="1">
    <citation type="submission" date="2008-06" db="EMBL/GenBank/DDBJ databases">
        <title>Complete sequence of chromosome of Prosthecochloris aestuarii DSM 271.</title>
        <authorList>
            <consortium name="US DOE Joint Genome Institute"/>
            <person name="Lucas S."/>
            <person name="Copeland A."/>
            <person name="Lapidus A."/>
            <person name="Glavina del Rio T."/>
            <person name="Dalin E."/>
            <person name="Tice H."/>
            <person name="Bruce D."/>
            <person name="Goodwin L."/>
            <person name="Pitluck S."/>
            <person name="Schmutz J."/>
            <person name="Larimer F."/>
            <person name="Land M."/>
            <person name="Hauser L."/>
            <person name="Kyrpides N."/>
            <person name="Anderson I."/>
            <person name="Liu Z."/>
            <person name="Li T."/>
            <person name="Zhao F."/>
            <person name="Overmann J."/>
            <person name="Bryant D.A."/>
            <person name="Richardson P."/>
        </authorList>
    </citation>
    <scope>NUCLEOTIDE SEQUENCE [LARGE SCALE GENOMIC DNA]</scope>
    <source>
        <strain>DSM 271 / SK 413</strain>
    </source>
</reference>
<name>PGK_PROA2</name>
<dbReference type="EC" id="2.7.2.3" evidence="1"/>
<dbReference type="EMBL" id="CP001108">
    <property type="protein sequence ID" value="ACF47277.1"/>
    <property type="molecule type" value="Genomic_DNA"/>
</dbReference>
<dbReference type="RefSeq" id="WP_012506807.1">
    <property type="nucleotide sequence ID" value="NC_011059.1"/>
</dbReference>
<dbReference type="SMR" id="B4S6S2"/>
<dbReference type="STRING" id="290512.Paes_2276"/>
<dbReference type="KEGG" id="paa:Paes_2276"/>
<dbReference type="eggNOG" id="COG0126">
    <property type="taxonomic scope" value="Bacteria"/>
</dbReference>
<dbReference type="HOGENOM" id="CLU_025427_0_2_10"/>
<dbReference type="UniPathway" id="UPA00109">
    <property type="reaction ID" value="UER00185"/>
</dbReference>
<dbReference type="Proteomes" id="UP000002725">
    <property type="component" value="Chromosome"/>
</dbReference>
<dbReference type="GO" id="GO:0005829">
    <property type="term" value="C:cytosol"/>
    <property type="evidence" value="ECO:0007669"/>
    <property type="project" value="TreeGrafter"/>
</dbReference>
<dbReference type="GO" id="GO:0043531">
    <property type="term" value="F:ADP binding"/>
    <property type="evidence" value="ECO:0007669"/>
    <property type="project" value="TreeGrafter"/>
</dbReference>
<dbReference type="GO" id="GO:0005524">
    <property type="term" value="F:ATP binding"/>
    <property type="evidence" value="ECO:0007669"/>
    <property type="project" value="UniProtKB-KW"/>
</dbReference>
<dbReference type="GO" id="GO:0004618">
    <property type="term" value="F:phosphoglycerate kinase activity"/>
    <property type="evidence" value="ECO:0007669"/>
    <property type="project" value="UniProtKB-UniRule"/>
</dbReference>
<dbReference type="GO" id="GO:0006094">
    <property type="term" value="P:gluconeogenesis"/>
    <property type="evidence" value="ECO:0007669"/>
    <property type="project" value="TreeGrafter"/>
</dbReference>
<dbReference type="GO" id="GO:0006096">
    <property type="term" value="P:glycolytic process"/>
    <property type="evidence" value="ECO:0007669"/>
    <property type="project" value="UniProtKB-UniRule"/>
</dbReference>
<dbReference type="CDD" id="cd00318">
    <property type="entry name" value="Phosphoglycerate_kinase"/>
    <property type="match status" value="1"/>
</dbReference>
<dbReference type="FunFam" id="3.40.50.1260:FF:000003">
    <property type="entry name" value="Phosphoglycerate kinase"/>
    <property type="match status" value="1"/>
</dbReference>
<dbReference type="FunFam" id="3.40.50.1260:FF:000006">
    <property type="entry name" value="Phosphoglycerate kinase"/>
    <property type="match status" value="1"/>
</dbReference>
<dbReference type="Gene3D" id="3.40.50.1260">
    <property type="entry name" value="Phosphoglycerate kinase, N-terminal domain"/>
    <property type="match status" value="2"/>
</dbReference>
<dbReference type="HAMAP" id="MF_00145">
    <property type="entry name" value="Phosphoglyc_kinase"/>
    <property type="match status" value="1"/>
</dbReference>
<dbReference type="InterPro" id="IPR001576">
    <property type="entry name" value="Phosphoglycerate_kinase"/>
</dbReference>
<dbReference type="InterPro" id="IPR015824">
    <property type="entry name" value="Phosphoglycerate_kinase_N"/>
</dbReference>
<dbReference type="InterPro" id="IPR036043">
    <property type="entry name" value="Phosphoglycerate_kinase_sf"/>
</dbReference>
<dbReference type="PANTHER" id="PTHR11406">
    <property type="entry name" value="PHOSPHOGLYCERATE KINASE"/>
    <property type="match status" value="1"/>
</dbReference>
<dbReference type="PANTHER" id="PTHR11406:SF23">
    <property type="entry name" value="PHOSPHOGLYCERATE KINASE 1, CHLOROPLASTIC-RELATED"/>
    <property type="match status" value="1"/>
</dbReference>
<dbReference type="Pfam" id="PF00162">
    <property type="entry name" value="PGK"/>
    <property type="match status" value="1"/>
</dbReference>
<dbReference type="PIRSF" id="PIRSF000724">
    <property type="entry name" value="Pgk"/>
    <property type="match status" value="1"/>
</dbReference>
<dbReference type="PRINTS" id="PR00477">
    <property type="entry name" value="PHGLYCKINASE"/>
</dbReference>
<dbReference type="SUPFAM" id="SSF53748">
    <property type="entry name" value="Phosphoglycerate kinase"/>
    <property type="match status" value="1"/>
</dbReference>